<organismHost>
    <name type="scientific">Homo sapiens</name>
    <name type="common">Human</name>
    <dbReference type="NCBI Taxonomy" id="9606"/>
</organismHost>
<evidence type="ECO:0000250" key="1">
    <source>
        <dbReference type="UniProtKB" id="P0DOE5"/>
    </source>
</evidence>
<evidence type="ECO:0000255" key="2"/>
<evidence type="ECO:0000269" key="3">
    <source>
    </source>
</evidence>
<evidence type="ECO:0000269" key="4">
    <source>
    </source>
</evidence>
<evidence type="ECO:0000269" key="5">
    <source>
    </source>
</evidence>
<evidence type="ECO:0000303" key="6">
    <source>
    </source>
</evidence>
<evidence type="ECO:0000305" key="7"/>
<evidence type="ECO:0000305" key="8">
    <source>
    </source>
</evidence>
<sequence>MENTSITIEFSSKFWPYFTLIHMITTIISLLIIISIMIAILNKLCEYNVFHNKTFELPRARVNT</sequence>
<protein>
    <recommendedName>
        <fullName evidence="6">Small hydrophobic protein</fullName>
    </recommendedName>
    <alternativeName>
        <fullName>Small protein 1A</fullName>
    </alternativeName>
</protein>
<comment type="function">
    <text evidence="1">Viroporin that forms a homopentameric ion channel displaying low ion selectivity. May play a role in virus morphogenesis and pathogenicity at various stages of the viral life cycle. Accumulates at the membrane of the Golgi apparatus in infected cells and may facilitate virus release by modifying the secretory pathway. May enhance host membrane permeability and disrupt cellular ion homeostasis, which can be sensed as damage-associated molecular patterns/danger signals, triggering NLRP3 inflammasome activation and inflammatory immune response. Also inhibits host TNFA-mediated signaling pathway and may delay apoptosis, allowing time for the virus to replicate.</text>
</comment>
<comment type="activity regulation">
    <text evidence="1">Channel activity is inhibited by copper. Also inhibited by small-molecule pyronin B.</text>
</comment>
<comment type="subunit">
    <text evidence="1">Homopentamer forming a funnel-like pore. Interacts with glycoprotein G; this interaction occurs on the surface of virion particles and infected cells. Interacts with host BCAP31 (via C-terminus); this interaction is direct.</text>
</comment>
<comment type="subcellular location">
    <subcellularLocation>
        <location evidence="1">Virion membrane</location>
        <topology evidence="1">Single-pass type II membrane protein</topology>
    </subcellularLocation>
    <subcellularLocation>
        <location evidence="1">Host cell membrane</location>
        <topology evidence="1">Single-pass type II membrane protein</topology>
    </subcellularLocation>
    <subcellularLocation>
        <location evidence="1">Host Golgi apparatus membrane</location>
        <topology evidence="1">Single-pass type II membrane protein</topology>
    </subcellularLocation>
    <subcellularLocation>
        <location evidence="1">Host endoplasmic reticulum membrane</location>
        <topology evidence="1">Single-pass type II membrane protein</topology>
    </subcellularLocation>
    <text evidence="1">Present in very small amount in the virion. Detected in lipid rafts of host Golgi apparatus membrane.</text>
</comment>
<comment type="alternative products">
    <event type="alternative initiation"/>
    <isoform>
        <id>P0DOE4-1</id>
        <name evidence="1">SH</name>
        <sequence type="displayed"/>
    </isoform>
    <isoform>
        <id>P0DOE4-2</id>
        <name evidence="1">SHt</name>
        <sequence type="described" ref="VSP_058891"/>
    </isoform>
</comment>
<comment type="PTM">
    <text evidence="1">Four species of SH have been detected in infected cell cytoplasm: a 7.5 kDa non-glycosylated form (SH0), a 13-15 kDa form that contains one or two N-linked carbohydrate side chains of the high-mannose type (SHg), a 21-30 kDa polylactosaminoglycan-modified form of the protein (SHp), and the isoform generated by alternative translational initiation. Of these different forms, SH0 is by far the most abundant protein detected during virus infection.</text>
</comment>
<comment type="PTM">
    <text evidence="1">Tyrosine phosphorylated.</text>
</comment>
<comment type="miscellaneous">
    <molecule>Isoform SHt</molecule>
    <text evidence="1">Produced by alternative initiation at Met-23 of isoform SH and gives rise to a 4.6 kDa truncated form of the non-glycosylated protein.</text>
</comment>
<comment type="similarity">
    <text evidence="7">Belongs to the orthopneumovirus small hydrophobic protein family.</text>
</comment>
<feature type="chain" id="PRO_0000439635" description="Small hydrophobic protein">
    <location>
        <begin position="1"/>
        <end position="64"/>
    </location>
</feature>
<feature type="topological domain" description="Intravirion" evidence="8">
    <location>
        <begin position="1"/>
        <end position="20"/>
    </location>
</feature>
<feature type="transmembrane region" description="Helical; Signal-anchor for type II membrane protein" evidence="3">
    <location>
        <begin position="21"/>
        <end position="44"/>
    </location>
</feature>
<feature type="topological domain" description="Virion surface" evidence="3">
    <location>
        <begin position="45"/>
        <end position="64"/>
    </location>
</feature>
<feature type="region of interest" description="Interaction with host BCAP31" evidence="5">
    <location>
        <begin position="6"/>
        <end position="15"/>
    </location>
</feature>
<feature type="region of interest" description="Interaction with small-molecule inhibitor" evidence="4">
    <location>
        <begin position="38"/>
        <end position="43"/>
    </location>
</feature>
<feature type="site" description="Involved in opening and closing mechanism of the pentameric structure" evidence="1">
    <location>
        <position position="22"/>
    </location>
</feature>
<feature type="glycosylation site" description="N-linked (GlcNAc...) asparagine; by host" evidence="2">
    <location>
        <position position="52"/>
    </location>
</feature>
<feature type="splice variant" id="VSP_058891" description="In isoform SHt." evidence="7">
    <location>
        <begin position="1"/>
        <end position="22"/>
    </location>
</feature>
<feature type="mutagenesis site" description="Reduces channel activity." evidence="4">
    <original>I</original>
    <variation>F</variation>
    <location>
        <position position="21"/>
    </location>
</feature>
<feature type="mutagenesis site" description="Reduces the effect of small-molecule inhibitor." evidence="4">
    <original>I</original>
    <variation>Y</variation>
    <location>
        <position position="21"/>
    </location>
</feature>
<feature type="mutagenesis site" description="Impairs channel activity; when associated with A-51." evidence="3">
    <original>H</original>
    <variation>A</variation>
    <location>
        <position position="22"/>
    </location>
</feature>
<feature type="mutagenesis site" description="Impairs channel activity; when associated with F-51. Abolishes the effect of small-molecule inhibitor." evidence="3 4">
    <original>H</original>
    <variation>F</variation>
    <location>
        <position position="22"/>
    </location>
</feature>
<feature type="mutagenesis site" description="Abolishes the effect of small-molecule inhibitor." evidence="4">
    <original>A</original>
    <variation>S</variation>
    <location>
        <position position="39"/>
    </location>
</feature>
<feature type="mutagenesis site" description="Impairs channel activity; when associated with A-22." evidence="3">
    <original>H</original>
    <variation>A</variation>
    <location>
        <position position="51"/>
    </location>
</feature>
<feature type="mutagenesis site" description="Impairs channel activity; when associated with F-22." evidence="3 4">
    <original>H</original>
    <variation>F</variation>
    <location>
        <position position="51"/>
    </location>
</feature>
<organism>
    <name type="scientific">Human respiratory syncytial virus A (strain S-2)</name>
    <name type="common">HRSV-S2</name>
    <dbReference type="NCBI Taxonomy" id="410078"/>
    <lineage>
        <taxon>Viruses</taxon>
        <taxon>Riboviria</taxon>
        <taxon>Orthornavirae</taxon>
        <taxon>Negarnaviricota</taxon>
        <taxon>Haploviricotina</taxon>
        <taxon>Monjiviricetes</taxon>
        <taxon>Mononegavirales</taxon>
        <taxon>Pneumoviridae</taxon>
        <taxon>Orthopneumovirus</taxon>
        <taxon>Orthopneumovirus hominis</taxon>
    </lineage>
</organism>
<name>SH_HRSS2</name>
<gene>
    <name evidence="6" type="primary">SH</name>
    <name evidence="1" type="synonym">1A</name>
</gene>
<proteinExistence type="evidence at protein level"/>
<reference key="1">
    <citation type="journal article" date="1996" name="Vaccine">
        <title>Identification of mutations contributing to the reduced virulence of a modified strain of respiratory syncytial virus.</title>
        <authorList>
            <person name="Tolley K.P."/>
            <person name="Marriott A.C."/>
            <person name="Simpson A."/>
            <person name="Plows D.J."/>
            <person name="Matthews D.A."/>
            <person name="Longhurst S.J."/>
            <person name="Evans J.E."/>
            <person name="Johnson J.L."/>
            <person name="Cane P.A."/>
            <person name="Easton A.J."/>
            <person name="Pringle C.R."/>
        </authorList>
    </citation>
    <scope>NUCLEOTIDE SEQUENCE [GENOMIC RNA]</scope>
</reference>
<reference key="2">
    <citation type="journal article" date="2012" name="J. Biol. Chem.">
        <title>The small hydrophobic protein of the human respiratory syncytial virus forms pentameric ion channels.</title>
        <authorList>
            <person name="Gan S.W."/>
            <person name="Tan E."/>
            <person name="Lin X."/>
            <person name="Yu D."/>
            <person name="Wang J."/>
            <person name="Tan G.M."/>
            <person name="Vararattanavech A."/>
            <person name="Yeo C.Y."/>
            <person name="Soon C.H."/>
            <person name="Soong T.W."/>
            <person name="Pervushin K."/>
            <person name="Torres J."/>
        </authorList>
    </citation>
    <scope>FUNCTION</scope>
    <scope>HOMOPENTAMERIZATION</scope>
    <scope>SUBCELLULAR LOCATION</scope>
    <scope>ACTIVITY REGULATION</scope>
    <scope>MUTAGENESIS OF HIS-22 AND HIS-51</scope>
    <scope>TOPOLOGY</scope>
</reference>
<reference key="3">
    <citation type="journal article" date="2015" name="Virology">
        <title>Interaction between human BAP31 and respiratory syncytial virus small hydrophobic (SH) protein.</title>
        <authorList>
            <person name="Li Y."/>
            <person name="Jain N."/>
            <person name="Limpanawat S."/>
            <person name="To J."/>
            <person name="Quistgaard E.M."/>
            <person name="Nordlund P."/>
            <person name="Thanabalu T."/>
            <person name="Torres J."/>
        </authorList>
    </citation>
    <scope>SUBCELLULAR LOCATION</scope>
    <scope>INTERACTION WITH BCAP31</scope>
    <scope>REGION</scope>
</reference>
<reference key="4">
    <citation type="journal article" date="2014" name="J. Virol.">
        <title>Inhibition of the human respiratory syncytial virus small hydrophobic protein and structural variations in a bicelle environment.</title>
        <authorList>
            <person name="Li Y."/>
            <person name="To J."/>
            <person name="Verdia-Baguena C."/>
            <person name="Dossena S."/>
            <person name="Surya W."/>
            <person name="Huang M."/>
            <person name="Paulmichl M."/>
            <person name="Liu D.X."/>
            <person name="Aguilella V.M."/>
            <person name="Torres J."/>
        </authorList>
    </citation>
    <scope>STRUCTURE BY NMR OF 38-64</scope>
    <scope>FUNCTION</scope>
    <scope>MUTAGENESIS OF ILE-21; HIS-22; ALA-39 AND HIS-51</scope>
    <scope>ACTIVITY REGULATION</scope>
    <scope>REGION</scope>
</reference>
<accession>P0DOE4</accession>
<accession>P04852</accession>
<dbReference type="EMBL" id="U39661">
    <property type="protein sequence ID" value="AAC57035.1"/>
    <property type="molecule type" value="Genomic_RNA"/>
</dbReference>
<dbReference type="EMBL" id="U39662">
    <property type="protein sequence ID" value="AAC57025.1"/>
    <property type="molecule type" value="Genomic_RNA"/>
</dbReference>
<dbReference type="SMR" id="P0DOE4"/>
<dbReference type="GlyCosmos" id="P0DOE4">
    <property type="glycosylation" value="1 site, No reported glycans"/>
</dbReference>
<dbReference type="KEGG" id="vg:1494473"/>
<dbReference type="Proteomes" id="UP000101899">
    <property type="component" value="Segment"/>
</dbReference>
<dbReference type="Proteomes" id="UP000113393">
    <property type="component" value="Genome"/>
</dbReference>
<dbReference type="GO" id="GO:0044167">
    <property type="term" value="C:host cell endoplasmic reticulum membrane"/>
    <property type="evidence" value="ECO:0007669"/>
    <property type="project" value="UniProtKB-SubCell"/>
</dbReference>
<dbReference type="GO" id="GO:0044178">
    <property type="term" value="C:host cell Golgi membrane"/>
    <property type="evidence" value="ECO:0007669"/>
    <property type="project" value="UniProtKB-SubCell"/>
</dbReference>
<dbReference type="GO" id="GO:0020002">
    <property type="term" value="C:host cell plasma membrane"/>
    <property type="evidence" value="ECO:0007669"/>
    <property type="project" value="UniProtKB-SubCell"/>
</dbReference>
<dbReference type="GO" id="GO:0016020">
    <property type="term" value="C:membrane"/>
    <property type="evidence" value="ECO:0007669"/>
    <property type="project" value="UniProtKB-KW"/>
</dbReference>
<dbReference type="GO" id="GO:0055036">
    <property type="term" value="C:virion membrane"/>
    <property type="evidence" value="ECO:0007669"/>
    <property type="project" value="UniProtKB-SubCell"/>
</dbReference>
<dbReference type="GO" id="GO:0005254">
    <property type="term" value="F:chloride channel activity"/>
    <property type="evidence" value="ECO:0000314"/>
    <property type="project" value="UniProtKB"/>
</dbReference>
<dbReference type="GO" id="GO:0015271">
    <property type="term" value="F:outward rectifier potassium channel activity"/>
    <property type="evidence" value="ECO:0000314"/>
    <property type="project" value="UniProtKB"/>
</dbReference>
<dbReference type="GO" id="GO:0005267">
    <property type="term" value="F:potassium channel activity"/>
    <property type="evidence" value="ECO:0000314"/>
    <property type="project" value="UniProtKB"/>
</dbReference>
<dbReference type="GO" id="GO:0005272">
    <property type="term" value="F:sodium channel activity"/>
    <property type="evidence" value="ECO:0000314"/>
    <property type="project" value="UniProtKB"/>
</dbReference>
<dbReference type="GO" id="GO:0052151">
    <property type="term" value="P:symbiont-mediated activation of host apoptosis"/>
    <property type="evidence" value="ECO:0007669"/>
    <property type="project" value="UniProtKB-KW"/>
</dbReference>
<dbReference type="InterPro" id="IPR005327">
    <property type="entry name" value="SHP"/>
</dbReference>
<dbReference type="Pfam" id="PF03579">
    <property type="entry name" value="SHP"/>
    <property type="match status" value="1"/>
</dbReference>
<keyword id="KW-1073">Activation of host caspases by virus</keyword>
<keyword id="KW-0024">Alternative initiation</keyword>
<keyword id="KW-0325">Glycoprotein</keyword>
<keyword id="KW-1032">Host cell membrane</keyword>
<keyword id="KW-1038">Host endoplasmic reticulum</keyword>
<keyword id="KW-1040">Host Golgi apparatus</keyword>
<keyword id="KW-1043">Host membrane</keyword>
<keyword id="KW-0945">Host-virus interaction</keyword>
<keyword id="KW-0407">Ion channel</keyword>
<keyword id="KW-0406">Ion transport</keyword>
<keyword id="KW-0472">Membrane</keyword>
<keyword id="KW-1119">Modulation of host cell apoptosis by virus</keyword>
<keyword id="KW-0597">Phosphoprotein</keyword>
<keyword id="KW-0735">Signal-anchor</keyword>
<keyword id="KW-0812">Transmembrane</keyword>
<keyword id="KW-1133">Transmembrane helix</keyword>
<keyword id="KW-0813">Transport</keyword>
<keyword id="KW-1182">Viral ion channel</keyword>
<keyword id="KW-0946">Virion</keyword>